<gene>
    <name evidence="1" type="primary">mscL3</name>
    <name type="ordered locus">mlr5692</name>
</gene>
<protein>
    <recommendedName>
        <fullName evidence="1">Large-conductance mechanosensitive channel 3</fullName>
    </recommendedName>
</protein>
<proteinExistence type="inferred from homology"/>
<evidence type="ECO:0000255" key="1">
    <source>
        <dbReference type="HAMAP-Rule" id="MF_00115"/>
    </source>
</evidence>
<evidence type="ECO:0000305" key="2"/>
<keyword id="KW-0997">Cell inner membrane</keyword>
<keyword id="KW-1003">Cell membrane</keyword>
<keyword id="KW-0407">Ion channel</keyword>
<keyword id="KW-0406">Ion transport</keyword>
<keyword id="KW-0472">Membrane</keyword>
<keyword id="KW-0812">Transmembrane</keyword>
<keyword id="KW-1133">Transmembrane helix</keyword>
<keyword id="KW-0813">Transport</keyword>
<reference key="1">
    <citation type="journal article" date="2000" name="DNA Res.">
        <title>Complete genome structure of the nitrogen-fixing symbiotic bacterium Mesorhizobium loti.</title>
        <authorList>
            <person name="Kaneko T."/>
            <person name="Nakamura Y."/>
            <person name="Sato S."/>
            <person name="Asamizu E."/>
            <person name="Kato T."/>
            <person name="Sasamoto S."/>
            <person name="Watanabe A."/>
            <person name="Idesawa K."/>
            <person name="Ishikawa A."/>
            <person name="Kawashima K."/>
            <person name="Kimura T."/>
            <person name="Kishida Y."/>
            <person name="Kiyokawa C."/>
            <person name="Kohara M."/>
            <person name="Matsumoto M."/>
            <person name="Matsuno A."/>
            <person name="Mochizuki Y."/>
            <person name="Nakayama S."/>
            <person name="Nakazaki N."/>
            <person name="Shimpo S."/>
            <person name="Sugimoto M."/>
            <person name="Takeuchi C."/>
            <person name="Yamada M."/>
            <person name="Tabata S."/>
        </authorList>
    </citation>
    <scope>NUCLEOTIDE SEQUENCE [LARGE SCALE GENOMIC DNA]</scope>
    <source>
        <strain>LMG 29417 / CECT 9101 / MAFF 303099</strain>
    </source>
</reference>
<accession>Q98B79</accession>
<feature type="chain" id="PRO_0000238027" description="Large-conductance mechanosensitive channel 3">
    <location>
        <begin position="1"/>
        <end position="140"/>
    </location>
</feature>
<feature type="transmembrane region" description="Helical" evidence="1">
    <location>
        <begin position="8"/>
        <end position="28"/>
    </location>
</feature>
<feature type="transmembrane region" description="Helical" evidence="1">
    <location>
        <begin position="30"/>
        <end position="50"/>
    </location>
</feature>
<feature type="transmembrane region" description="Helical" evidence="1">
    <location>
        <begin position="81"/>
        <end position="101"/>
    </location>
</feature>
<dbReference type="EMBL" id="BA000012">
    <property type="protein sequence ID" value="BAB52093.1"/>
    <property type="status" value="ALT_INIT"/>
    <property type="molecule type" value="Genomic_DNA"/>
</dbReference>
<dbReference type="SMR" id="Q98B79"/>
<dbReference type="KEGG" id="mlo:mlr5692"/>
<dbReference type="eggNOG" id="COG1970">
    <property type="taxonomic scope" value="Bacteria"/>
</dbReference>
<dbReference type="HOGENOM" id="CLU_095787_0_1_5"/>
<dbReference type="Proteomes" id="UP000000552">
    <property type="component" value="Chromosome"/>
</dbReference>
<dbReference type="GO" id="GO:0005886">
    <property type="term" value="C:plasma membrane"/>
    <property type="evidence" value="ECO:0007669"/>
    <property type="project" value="UniProtKB-SubCell"/>
</dbReference>
<dbReference type="GO" id="GO:0008381">
    <property type="term" value="F:mechanosensitive monoatomic ion channel activity"/>
    <property type="evidence" value="ECO:0007669"/>
    <property type="project" value="UniProtKB-UniRule"/>
</dbReference>
<dbReference type="Gene3D" id="1.10.1200.120">
    <property type="entry name" value="Large-conductance mechanosensitive channel, MscL, domain 1"/>
    <property type="match status" value="1"/>
</dbReference>
<dbReference type="HAMAP" id="MF_00115">
    <property type="entry name" value="MscL"/>
    <property type="match status" value="1"/>
</dbReference>
<dbReference type="InterPro" id="IPR019823">
    <property type="entry name" value="Mechanosensitive_channel_CS"/>
</dbReference>
<dbReference type="InterPro" id="IPR001185">
    <property type="entry name" value="MS_channel"/>
</dbReference>
<dbReference type="InterPro" id="IPR037673">
    <property type="entry name" value="MSC/AndL"/>
</dbReference>
<dbReference type="InterPro" id="IPR036019">
    <property type="entry name" value="MscL_channel"/>
</dbReference>
<dbReference type="NCBIfam" id="TIGR00220">
    <property type="entry name" value="mscL"/>
    <property type="match status" value="1"/>
</dbReference>
<dbReference type="NCBIfam" id="NF001843">
    <property type="entry name" value="PRK00567.1-4"/>
    <property type="match status" value="1"/>
</dbReference>
<dbReference type="NCBIfam" id="NF010557">
    <property type="entry name" value="PRK13952.1"/>
    <property type="match status" value="1"/>
</dbReference>
<dbReference type="PANTHER" id="PTHR30266:SF2">
    <property type="entry name" value="LARGE-CONDUCTANCE MECHANOSENSITIVE CHANNEL"/>
    <property type="match status" value="1"/>
</dbReference>
<dbReference type="PANTHER" id="PTHR30266">
    <property type="entry name" value="MECHANOSENSITIVE CHANNEL MSCL"/>
    <property type="match status" value="1"/>
</dbReference>
<dbReference type="Pfam" id="PF01741">
    <property type="entry name" value="MscL"/>
    <property type="match status" value="1"/>
</dbReference>
<dbReference type="PRINTS" id="PR01264">
    <property type="entry name" value="MECHCHANNEL"/>
</dbReference>
<dbReference type="SUPFAM" id="SSF81330">
    <property type="entry name" value="Gated mechanosensitive channel"/>
    <property type="match status" value="1"/>
</dbReference>
<dbReference type="PROSITE" id="PS01327">
    <property type="entry name" value="MSCL"/>
    <property type="match status" value="1"/>
</dbReference>
<comment type="function">
    <text evidence="1">Channel that opens in response to stretch forces in the membrane lipid bilayer. May participate in the regulation of osmotic pressure changes within the cell.</text>
</comment>
<comment type="subunit">
    <text evidence="1">Homopentamer.</text>
</comment>
<comment type="subcellular location">
    <subcellularLocation>
        <location evidence="1">Cell inner membrane</location>
        <topology evidence="1">Multi-pass membrane protein</topology>
    </subcellularLocation>
</comment>
<comment type="similarity">
    <text evidence="1">Belongs to the MscL family.</text>
</comment>
<comment type="sequence caution" evidence="2">
    <conflict type="erroneous initiation">
        <sequence resource="EMBL-CDS" id="BAB52093"/>
    </conflict>
</comment>
<sequence>MLKEFQEFISKGNVMDLAVGVIIGAAFGKIVTSLVDDVIMPIFGAIFGGLDFNNYYIGLSSAVNATSLAEAKKQGAVFAYGSFITAVLNFLILAFIIFLMVKAVNNLRRRLEREKPAAPAAPPPADVALLTEIRDLLAKR</sequence>
<name>MSCL3_RHILO</name>
<organism>
    <name type="scientific">Mesorhizobium japonicum (strain LMG 29417 / CECT 9101 / MAFF 303099)</name>
    <name type="common">Mesorhizobium loti (strain MAFF 303099)</name>
    <dbReference type="NCBI Taxonomy" id="266835"/>
    <lineage>
        <taxon>Bacteria</taxon>
        <taxon>Pseudomonadati</taxon>
        <taxon>Pseudomonadota</taxon>
        <taxon>Alphaproteobacteria</taxon>
        <taxon>Hyphomicrobiales</taxon>
        <taxon>Phyllobacteriaceae</taxon>
        <taxon>Mesorhizobium</taxon>
    </lineage>
</organism>